<sequence>MVVQNVQDLDVLPKHSSDSFDDDGRPKRTGTVWTASAHIITAVIGSGVLSLAWAVAQIGWIGGPVAMLLFSFVTFYTSTLLCSCYRSGDSVTGKRNYTYMDAIHSNLGGIKVKVCGVVQYVNLFGTAIGYTIASAISLVAIQRTSCQQMNGPNDPCHVNGNVYMIAFGIVQIIFSQIPDFDQLWWLSIVAAVMSFAYSAIGLGLGVSKVVENKEIKGSLTGVTVGTVTLSGTVTSSQKIWRTFQSLGNIAFAYSYSMILIEIQDTVKSPPAEVNTMRKATFVSVAVTTVFYMLCGCVGYAAFGDNAPGNLLAHGGFRNPYWLLDIANLAIVIHLVGAYQVYCQPLFAFVEKEASRRFPESEFVTKEIKIQLFPGKPFNLNLFRLVWRTFFVMTTTLISMLMPFFNDVVGLLGAIGFWPLTVYFPVEMYIAQKNVPRWGTKWVCLQVLSVTCLFVSVAAAAGSVIGIVSDLKVYKPFQSEF</sequence>
<reference key="1">
    <citation type="journal article" date="1995" name="J. Biol. Chem.">
        <title>Substrate specificity and expression profile of amino acid transporters (AAPs) in Arabidopsis.</title>
        <authorList>
            <person name="Fischer W.-N."/>
            <person name="Kwart M."/>
            <person name="Hummel S."/>
            <person name="Frommer W.B."/>
        </authorList>
    </citation>
    <scope>NUCLEOTIDE SEQUENCE [MRNA]</scope>
    <scope>FUNCTION</scope>
    <scope>ACTIVITY REGULATION</scope>
    <scope>DEVELOPMENTAL STAGE</scope>
    <scope>TISSUE SPECIFICITY</scope>
    <source>
        <strain>cv. Landsberg erecta</strain>
    </source>
</reference>
<reference key="2">
    <citation type="journal article" date="2000" name="Nature">
        <title>Sequence and analysis of chromosome 1 of the plant Arabidopsis thaliana.</title>
        <authorList>
            <person name="Theologis A."/>
            <person name="Ecker J.R."/>
            <person name="Palm C.J."/>
            <person name="Federspiel N.A."/>
            <person name="Kaul S."/>
            <person name="White O."/>
            <person name="Alonso J."/>
            <person name="Altafi H."/>
            <person name="Araujo R."/>
            <person name="Bowman C.L."/>
            <person name="Brooks S.Y."/>
            <person name="Buehler E."/>
            <person name="Chan A."/>
            <person name="Chao Q."/>
            <person name="Chen H."/>
            <person name="Cheuk R.F."/>
            <person name="Chin C.W."/>
            <person name="Chung M.K."/>
            <person name="Conn L."/>
            <person name="Conway A.B."/>
            <person name="Conway A.R."/>
            <person name="Creasy T.H."/>
            <person name="Dewar K."/>
            <person name="Dunn P."/>
            <person name="Etgu P."/>
            <person name="Feldblyum T.V."/>
            <person name="Feng J.-D."/>
            <person name="Fong B."/>
            <person name="Fujii C.Y."/>
            <person name="Gill J.E."/>
            <person name="Goldsmith A.D."/>
            <person name="Haas B."/>
            <person name="Hansen N.F."/>
            <person name="Hughes B."/>
            <person name="Huizar L."/>
            <person name="Hunter J.L."/>
            <person name="Jenkins J."/>
            <person name="Johnson-Hopson C."/>
            <person name="Khan S."/>
            <person name="Khaykin E."/>
            <person name="Kim C.J."/>
            <person name="Koo H.L."/>
            <person name="Kremenetskaia I."/>
            <person name="Kurtz D.B."/>
            <person name="Kwan A."/>
            <person name="Lam B."/>
            <person name="Langin-Hooper S."/>
            <person name="Lee A."/>
            <person name="Lee J.M."/>
            <person name="Lenz C.A."/>
            <person name="Li J.H."/>
            <person name="Li Y.-P."/>
            <person name="Lin X."/>
            <person name="Liu S.X."/>
            <person name="Liu Z.A."/>
            <person name="Luros J.S."/>
            <person name="Maiti R."/>
            <person name="Marziali A."/>
            <person name="Militscher J."/>
            <person name="Miranda M."/>
            <person name="Nguyen M."/>
            <person name="Nierman W.C."/>
            <person name="Osborne B.I."/>
            <person name="Pai G."/>
            <person name="Peterson J."/>
            <person name="Pham P.K."/>
            <person name="Rizzo M."/>
            <person name="Rooney T."/>
            <person name="Rowley D."/>
            <person name="Sakano H."/>
            <person name="Salzberg S.L."/>
            <person name="Schwartz J.R."/>
            <person name="Shinn P."/>
            <person name="Southwick A.M."/>
            <person name="Sun H."/>
            <person name="Tallon L.J."/>
            <person name="Tambunga G."/>
            <person name="Toriumi M.J."/>
            <person name="Town C.D."/>
            <person name="Utterback T."/>
            <person name="Van Aken S."/>
            <person name="Vaysberg M."/>
            <person name="Vysotskaia V.S."/>
            <person name="Walker M."/>
            <person name="Wu D."/>
            <person name="Yu G."/>
            <person name="Fraser C.M."/>
            <person name="Venter J.C."/>
            <person name="Davis R.W."/>
        </authorList>
    </citation>
    <scope>NUCLEOTIDE SEQUENCE [LARGE SCALE GENOMIC DNA]</scope>
    <source>
        <strain>cv. Columbia</strain>
    </source>
</reference>
<reference key="3">
    <citation type="journal article" date="2017" name="Plant J.">
        <title>Araport11: a complete reannotation of the Arabidopsis thaliana reference genome.</title>
        <authorList>
            <person name="Cheng C.Y."/>
            <person name="Krishnakumar V."/>
            <person name="Chan A.P."/>
            <person name="Thibaud-Nissen F."/>
            <person name="Schobel S."/>
            <person name="Town C.D."/>
        </authorList>
    </citation>
    <scope>GENOME REANNOTATION</scope>
    <source>
        <strain>cv. Columbia</strain>
    </source>
</reference>
<reference key="4">
    <citation type="journal article" date="2003" name="Science">
        <title>Empirical analysis of transcriptional activity in the Arabidopsis genome.</title>
        <authorList>
            <person name="Yamada K."/>
            <person name="Lim J."/>
            <person name="Dale J.M."/>
            <person name="Chen H."/>
            <person name="Shinn P."/>
            <person name="Palm C.J."/>
            <person name="Southwick A.M."/>
            <person name="Wu H.C."/>
            <person name="Kim C.J."/>
            <person name="Nguyen M."/>
            <person name="Pham P.K."/>
            <person name="Cheuk R.F."/>
            <person name="Karlin-Newmann G."/>
            <person name="Liu S.X."/>
            <person name="Lam B."/>
            <person name="Sakano H."/>
            <person name="Wu T."/>
            <person name="Yu G."/>
            <person name="Miranda M."/>
            <person name="Quach H.L."/>
            <person name="Tripp M."/>
            <person name="Chang C.H."/>
            <person name="Lee J.M."/>
            <person name="Toriumi M.J."/>
            <person name="Chan M.M."/>
            <person name="Tang C.C."/>
            <person name="Onodera C.S."/>
            <person name="Deng J.M."/>
            <person name="Akiyama K."/>
            <person name="Ansari Y."/>
            <person name="Arakawa T."/>
            <person name="Banh J."/>
            <person name="Banno F."/>
            <person name="Bowser L."/>
            <person name="Brooks S.Y."/>
            <person name="Carninci P."/>
            <person name="Chao Q."/>
            <person name="Choy N."/>
            <person name="Enju A."/>
            <person name="Goldsmith A.D."/>
            <person name="Gurjal M."/>
            <person name="Hansen N.F."/>
            <person name="Hayashizaki Y."/>
            <person name="Johnson-Hopson C."/>
            <person name="Hsuan V.W."/>
            <person name="Iida K."/>
            <person name="Karnes M."/>
            <person name="Khan S."/>
            <person name="Koesema E."/>
            <person name="Ishida J."/>
            <person name="Jiang P.X."/>
            <person name="Jones T."/>
            <person name="Kawai J."/>
            <person name="Kamiya A."/>
            <person name="Meyers C."/>
            <person name="Nakajima M."/>
            <person name="Narusaka M."/>
            <person name="Seki M."/>
            <person name="Sakurai T."/>
            <person name="Satou M."/>
            <person name="Tamse R."/>
            <person name="Vaysberg M."/>
            <person name="Wallender E.K."/>
            <person name="Wong C."/>
            <person name="Yamamura Y."/>
            <person name="Yuan S."/>
            <person name="Shinozaki K."/>
            <person name="Davis R.W."/>
            <person name="Theologis A."/>
            <person name="Ecker J.R."/>
        </authorList>
    </citation>
    <scope>NUCLEOTIDE SEQUENCE [LARGE SCALE MRNA]</scope>
    <source>
        <strain>cv. Columbia</strain>
    </source>
</reference>
<reference key="5">
    <citation type="journal article" date="1997" name="J. Biol. Chem.">
        <title>Specificity and stoichiometry of the Arabidopsis H+/amino acid transporter AAP5.</title>
        <authorList>
            <person name="Boorer K.J."/>
            <person name="Fischer W.-N."/>
        </authorList>
    </citation>
    <scope>CHARACTERIZATION</scope>
</reference>
<reference key="6">
    <citation type="journal article" date="2002" name="Plant J.">
        <title>Low and high affinity amino acid H+-cotransporters for cellular import of neutral and charged amino acids.</title>
        <authorList>
            <person name="Fischer W.-N."/>
            <person name="Loo D.D.F."/>
            <person name="Koch W."/>
            <person name="Ludewig U."/>
            <person name="Boorer K.J."/>
            <person name="Tegeder M."/>
            <person name="Rentsch D."/>
            <person name="Wright E.M."/>
            <person name="Frommer W.B."/>
        </authorList>
    </citation>
    <scope>CHARACTERIZATION</scope>
</reference>
<reference key="7">
    <citation type="journal article" date="2008" name="New Phytol.">
        <title>Root uptake of cationic amino acids by Arabidopsis depends on functional expression of amino acid permease 5.</title>
        <authorList>
            <person name="Svennerstam H."/>
            <person name="Ganeteg U."/>
            <person name="Naesholm T."/>
        </authorList>
    </citation>
    <scope>FUNCTION</scope>
    <scope>DISRUPTION PHENOTYPE</scope>
</reference>
<gene>
    <name type="primary">AAP5</name>
    <name type="ordered locus">At1g44100</name>
    <name type="ORF">T7O23.19</name>
</gene>
<proteinExistence type="evidence at protein level"/>
<organism>
    <name type="scientific">Arabidopsis thaliana</name>
    <name type="common">Mouse-ear cress</name>
    <dbReference type="NCBI Taxonomy" id="3702"/>
    <lineage>
        <taxon>Eukaryota</taxon>
        <taxon>Viridiplantae</taxon>
        <taxon>Streptophyta</taxon>
        <taxon>Embryophyta</taxon>
        <taxon>Tracheophyta</taxon>
        <taxon>Spermatophyta</taxon>
        <taxon>Magnoliopsida</taxon>
        <taxon>eudicotyledons</taxon>
        <taxon>Gunneridae</taxon>
        <taxon>Pentapetalae</taxon>
        <taxon>rosids</taxon>
        <taxon>malvids</taxon>
        <taxon>Brassicales</taxon>
        <taxon>Brassicaceae</taxon>
        <taxon>Camelineae</taxon>
        <taxon>Arabidopsis</taxon>
    </lineage>
</organism>
<dbReference type="EMBL" id="X77501">
    <property type="protein sequence ID" value="CAA54632.1"/>
    <property type="molecule type" value="mRNA"/>
</dbReference>
<dbReference type="EMBL" id="AC074228">
    <property type="protein sequence ID" value="AAG50558.1"/>
    <property type="status" value="ALT_SEQ"/>
    <property type="molecule type" value="Genomic_DNA"/>
</dbReference>
<dbReference type="EMBL" id="CP002684">
    <property type="protein sequence ID" value="AEE32020.1"/>
    <property type="molecule type" value="Genomic_DNA"/>
</dbReference>
<dbReference type="EMBL" id="BT002389">
    <property type="protein sequence ID" value="AAO00749.1"/>
    <property type="molecule type" value="mRNA"/>
</dbReference>
<dbReference type="EMBL" id="BT009680">
    <property type="protein sequence ID" value="AAP81798.1"/>
    <property type="molecule type" value="mRNA"/>
</dbReference>
<dbReference type="PIR" id="C57479">
    <property type="entry name" value="C57479"/>
</dbReference>
<dbReference type="PIR" id="C96505">
    <property type="entry name" value="C96505"/>
</dbReference>
<dbReference type="RefSeq" id="NP_175076.2">
    <property type="nucleotide sequence ID" value="NM_103536.4"/>
</dbReference>
<dbReference type="BioGRID" id="26238">
    <property type="interactions" value="21"/>
</dbReference>
<dbReference type="FunCoup" id="Q8GUM3">
    <property type="interactions" value="2"/>
</dbReference>
<dbReference type="IntAct" id="Q8GUM3">
    <property type="interactions" value="14"/>
</dbReference>
<dbReference type="STRING" id="3702.Q8GUM3"/>
<dbReference type="iPTMnet" id="Q8GUM3"/>
<dbReference type="PaxDb" id="3702-AT1G44100.1"/>
<dbReference type="ProteomicsDB" id="244493"/>
<dbReference type="EnsemblPlants" id="AT1G44100.1">
    <property type="protein sequence ID" value="AT1G44100.1"/>
    <property type="gene ID" value="AT1G44100"/>
</dbReference>
<dbReference type="GeneID" id="841013"/>
<dbReference type="Gramene" id="AT1G44100.1">
    <property type="protein sequence ID" value="AT1G44100.1"/>
    <property type="gene ID" value="AT1G44100"/>
</dbReference>
<dbReference type="KEGG" id="ath:AT1G44100"/>
<dbReference type="Araport" id="AT1G44100"/>
<dbReference type="TAIR" id="AT1G44100">
    <property type="gene designation" value="AAP5"/>
</dbReference>
<dbReference type="eggNOG" id="KOG1303">
    <property type="taxonomic scope" value="Eukaryota"/>
</dbReference>
<dbReference type="HOGENOM" id="CLU_031247_4_1_1"/>
<dbReference type="InParanoid" id="Q8GUM3"/>
<dbReference type="OMA" id="KNVPRWG"/>
<dbReference type="OrthoDB" id="40134at2759"/>
<dbReference type="PhylomeDB" id="Q8GUM3"/>
<dbReference type="PRO" id="PR:Q8GUM3"/>
<dbReference type="Proteomes" id="UP000006548">
    <property type="component" value="Chromosome 1"/>
</dbReference>
<dbReference type="ExpressionAtlas" id="Q8GUM3">
    <property type="expression patterns" value="baseline and differential"/>
</dbReference>
<dbReference type="GO" id="GO:0005886">
    <property type="term" value="C:plasma membrane"/>
    <property type="evidence" value="ECO:0007669"/>
    <property type="project" value="UniProtKB-SubCell"/>
</dbReference>
<dbReference type="GO" id="GO:0015171">
    <property type="term" value="F:amino acid transmembrane transporter activity"/>
    <property type="evidence" value="ECO:0000304"/>
    <property type="project" value="TAIR"/>
</dbReference>
<dbReference type="GO" id="GO:0015174">
    <property type="term" value="F:basic amino acid transmembrane transporter activity"/>
    <property type="evidence" value="ECO:0000314"/>
    <property type="project" value="TAIR"/>
</dbReference>
<dbReference type="GO" id="GO:0015293">
    <property type="term" value="F:symporter activity"/>
    <property type="evidence" value="ECO:0007669"/>
    <property type="project" value="UniProtKB-KW"/>
</dbReference>
<dbReference type="GO" id="GO:0015802">
    <property type="term" value="P:basic amino acid transport"/>
    <property type="evidence" value="ECO:0000304"/>
    <property type="project" value="TAIR"/>
</dbReference>
<dbReference type="FunFam" id="1.20.1740.10:FF:000055">
    <property type="entry name" value="Amino acid permease 6"/>
    <property type="match status" value="1"/>
</dbReference>
<dbReference type="InterPro" id="IPR013057">
    <property type="entry name" value="AA_transpt_TM"/>
</dbReference>
<dbReference type="PANTHER" id="PTHR48017">
    <property type="entry name" value="OS05G0424000 PROTEIN-RELATED"/>
    <property type="match status" value="1"/>
</dbReference>
<dbReference type="Pfam" id="PF01490">
    <property type="entry name" value="Aa_trans"/>
    <property type="match status" value="1"/>
</dbReference>
<keyword id="KW-0029">Amino-acid transport</keyword>
<keyword id="KW-1003">Cell membrane</keyword>
<keyword id="KW-0472">Membrane</keyword>
<keyword id="KW-1185">Reference proteome</keyword>
<keyword id="KW-0769">Symport</keyword>
<keyword id="KW-0812">Transmembrane</keyword>
<keyword id="KW-1133">Transmembrane helix</keyword>
<keyword id="KW-0813">Transport</keyword>
<name>AAP5_ARATH</name>
<feature type="chain" id="PRO_0000387503" description="Amino acid permease 5">
    <location>
        <begin position="1"/>
        <end position="480"/>
    </location>
</feature>
<feature type="topological domain" description="Cytoplasmic" evidence="1">
    <location>
        <begin position="1"/>
        <end position="31"/>
    </location>
</feature>
<feature type="transmembrane region" description="Helical" evidence="1">
    <location>
        <begin position="32"/>
        <end position="52"/>
    </location>
</feature>
<feature type="transmembrane region" description="Helical" evidence="1">
    <location>
        <begin position="53"/>
        <end position="73"/>
    </location>
</feature>
<feature type="topological domain" description="Cytoplasmic" evidence="1">
    <location>
        <begin position="74"/>
        <end position="120"/>
    </location>
</feature>
<feature type="transmembrane region" description="Helical" evidence="1">
    <location>
        <begin position="121"/>
        <end position="141"/>
    </location>
</feature>
<feature type="topological domain" description="Extracellular" evidence="1">
    <location>
        <begin position="142"/>
        <end position="157"/>
    </location>
</feature>
<feature type="transmembrane region" description="Helical" evidence="1">
    <location>
        <begin position="158"/>
        <end position="178"/>
    </location>
</feature>
<feature type="topological domain" description="Cytoplasmic" evidence="1">
    <location>
        <begin position="179"/>
        <end position="182"/>
    </location>
</feature>
<feature type="transmembrane region" description="Helical" evidence="1">
    <location>
        <begin position="183"/>
        <end position="203"/>
    </location>
</feature>
<feature type="topological domain" description="Extracellular" evidence="1">
    <location>
        <begin position="204"/>
        <end position="241"/>
    </location>
</feature>
<feature type="transmembrane region" description="Helical" evidence="1">
    <location>
        <begin position="242"/>
        <end position="262"/>
    </location>
</feature>
<feature type="topological domain" description="Cytoplasmic" evidence="1">
    <location>
        <begin position="263"/>
        <end position="280"/>
    </location>
</feature>
<feature type="transmembrane region" description="Helical" evidence="1">
    <location>
        <begin position="281"/>
        <end position="301"/>
    </location>
</feature>
<feature type="topological domain" description="Extracellular" evidence="1">
    <location>
        <begin position="302"/>
        <end position="328"/>
    </location>
</feature>
<feature type="transmembrane region" description="Helical" evidence="1">
    <location>
        <begin position="329"/>
        <end position="349"/>
    </location>
</feature>
<feature type="topological domain" description="Cytoplasmic" evidence="1">
    <location>
        <begin position="350"/>
        <end position="383"/>
    </location>
</feature>
<feature type="transmembrane region" description="Helical" evidence="1">
    <location>
        <begin position="384"/>
        <end position="404"/>
    </location>
</feature>
<feature type="topological domain" description="Extracellular" evidence="1">
    <location>
        <begin position="405"/>
        <end position="406"/>
    </location>
</feature>
<feature type="transmembrane region" description="Helical" evidence="1">
    <location>
        <begin position="407"/>
        <end position="427"/>
    </location>
</feature>
<feature type="topological domain" description="Cytoplasmic" evidence="1">
    <location>
        <begin position="428"/>
        <end position="445"/>
    </location>
</feature>
<feature type="transmembrane region" description="Helical" evidence="1">
    <location>
        <begin position="446"/>
        <end position="466"/>
    </location>
</feature>
<feature type="topological domain" description="Extracellular" evidence="1">
    <location>
        <begin position="467"/>
        <end position="480"/>
    </location>
</feature>
<feature type="region of interest" description="Disordered" evidence="2">
    <location>
        <begin position="1"/>
        <end position="25"/>
    </location>
</feature>
<feature type="compositionally biased region" description="Basic and acidic residues" evidence="2">
    <location>
        <begin position="11"/>
        <end position="25"/>
    </location>
</feature>
<feature type="sequence conflict" description="In Ref. 1; CAA54632." evidence="5" ref="1">
    <original>M</original>
    <variation>I</variation>
    <location>
        <position position="392"/>
    </location>
</feature>
<evidence type="ECO:0000255" key="1"/>
<evidence type="ECO:0000256" key="2">
    <source>
        <dbReference type="SAM" id="MobiDB-lite"/>
    </source>
</evidence>
<evidence type="ECO:0000269" key="3">
    <source>
    </source>
</evidence>
<evidence type="ECO:0000269" key="4">
    <source>
    </source>
</evidence>
<evidence type="ECO:0000305" key="5"/>
<comment type="function">
    <text evidence="3 4">Amino acid-proton symporter. Stereospecific transporter with a broad specificity for glutamate and both neutral and basic amino acids. Reduced affinities for asparagine and valine. High affinity transport of the cationic amino acids arginine and lysine, but not of histidine.</text>
</comment>
<comment type="activity regulation">
    <text evidence="4">Inhibited by 2,4-dinitrophenol.</text>
</comment>
<comment type="subcellular location">
    <subcellularLocation>
        <location evidence="5">Cell membrane</location>
        <topology evidence="5">Multi-pass membrane protein</topology>
    </subcellularLocation>
</comment>
<comment type="tissue specificity">
    <text evidence="4">Expressed in leaves, stems, roots, siliques and flowers.</text>
</comment>
<comment type="developmental stage">
    <text evidence="4">High expression in source leaves, but almost undetected in sink leaves.</text>
</comment>
<comment type="disruption phenotype">
    <text evidence="3">No visible phenotype, but decreased uptake of L-arginine and L-lysine.</text>
</comment>
<comment type="miscellaneous">
    <text>Basic amino acids are transported in their fully ionized form.</text>
</comment>
<comment type="similarity">
    <text evidence="5">Belongs to the amino acid/polyamine transporter 2 family. Amino acid/auxin permease (AAAP) (TC 2.A.18.2) subfamily.</text>
</comment>
<comment type="sequence caution" evidence="5">
    <conflict type="erroneous gene model prediction">
        <sequence resource="EMBL-CDS" id="AAG50558"/>
    </conflict>
</comment>
<protein>
    <recommendedName>
        <fullName>Amino acid permease 5</fullName>
    </recommendedName>
    <alternativeName>
        <fullName>Amino acid transporter AAP5</fullName>
    </alternativeName>
</protein>
<accession>Q8GUM3</accession>
<accession>Q39136</accession>
<accession>Q9C6Y2</accession>